<evidence type="ECO:0000255" key="1">
    <source>
        <dbReference type="HAMAP-Rule" id="MF_01358"/>
    </source>
</evidence>
<keyword id="KW-0150">Chloroplast</keyword>
<keyword id="KW-0472">Membrane</keyword>
<keyword id="KW-0520">NAD</keyword>
<keyword id="KW-0521">NADP</keyword>
<keyword id="KW-0934">Plastid</keyword>
<keyword id="KW-0618">Plastoquinone</keyword>
<keyword id="KW-0874">Quinone</keyword>
<keyword id="KW-0793">Thylakoid</keyword>
<keyword id="KW-1278">Translocase</keyword>
<keyword id="KW-0813">Transport</keyword>
<reference key="1">
    <citation type="submission" date="2006-01" db="EMBL/GenBank/DDBJ databases">
        <title>A comparison of the first two published chloroplast genomes in Asteraceae: Lactuca and Helianthus.</title>
        <authorList>
            <person name="Timme R.E."/>
            <person name="Kuehl J.V."/>
            <person name="Boore J.L."/>
            <person name="Jansen R.K."/>
        </authorList>
    </citation>
    <scope>NUCLEOTIDE SEQUENCE [LARGE SCALE GENOMIC DNA]</scope>
    <source>
        <strain>cv. HA383</strain>
    </source>
</reference>
<feature type="chain" id="PRO_0000357993" description="NAD(P)H-quinone oxidoreductase subunit H, chloroplastic">
    <location>
        <begin position="1"/>
        <end position="393"/>
    </location>
</feature>
<dbReference type="EC" id="7.1.1.-" evidence="1"/>
<dbReference type="EMBL" id="DQ383815">
    <property type="protein sequence ID" value="ABD47195.1"/>
    <property type="molecule type" value="Genomic_DNA"/>
</dbReference>
<dbReference type="RefSeq" id="YP_588167.1">
    <property type="nucleotide sequence ID" value="NC_007977.1"/>
</dbReference>
<dbReference type="SMR" id="Q1KXQ9"/>
<dbReference type="GeneID" id="4055621"/>
<dbReference type="KEGG" id="han:4055621"/>
<dbReference type="OrthoDB" id="1845069at2759"/>
<dbReference type="GO" id="GO:0009535">
    <property type="term" value="C:chloroplast thylakoid membrane"/>
    <property type="evidence" value="ECO:0007669"/>
    <property type="project" value="UniProtKB-SubCell"/>
</dbReference>
<dbReference type="GO" id="GO:0051287">
    <property type="term" value="F:NAD binding"/>
    <property type="evidence" value="ECO:0007669"/>
    <property type="project" value="InterPro"/>
</dbReference>
<dbReference type="GO" id="GO:0016655">
    <property type="term" value="F:oxidoreductase activity, acting on NAD(P)H, quinone or similar compound as acceptor"/>
    <property type="evidence" value="ECO:0007669"/>
    <property type="project" value="UniProtKB-UniRule"/>
</dbReference>
<dbReference type="GO" id="GO:0048038">
    <property type="term" value="F:quinone binding"/>
    <property type="evidence" value="ECO:0007669"/>
    <property type="project" value="UniProtKB-KW"/>
</dbReference>
<dbReference type="GO" id="GO:0019684">
    <property type="term" value="P:photosynthesis, light reaction"/>
    <property type="evidence" value="ECO:0007669"/>
    <property type="project" value="UniProtKB-UniRule"/>
</dbReference>
<dbReference type="FunFam" id="1.10.645.10:FF:000003">
    <property type="entry name" value="NAD(P)H-quinone oxidoreductase subunit H, chloroplastic"/>
    <property type="match status" value="1"/>
</dbReference>
<dbReference type="Gene3D" id="1.10.645.10">
    <property type="entry name" value="Cytochrome-c3 Hydrogenase, chain B"/>
    <property type="match status" value="1"/>
</dbReference>
<dbReference type="HAMAP" id="MF_01358">
    <property type="entry name" value="NDH1_NuoD"/>
    <property type="match status" value="1"/>
</dbReference>
<dbReference type="InterPro" id="IPR001135">
    <property type="entry name" value="NADH_Q_OxRdtase_suD"/>
</dbReference>
<dbReference type="InterPro" id="IPR014029">
    <property type="entry name" value="NADH_UbQ_OxRdtase_49kDa_CS"/>
</dbReference>
<dbReference type="InterPro" id="IPR022885">
    <property type="entry name" value="NDH1_su_D/H"/>
</dbReference>
<dbReference type="InterPro" id="IPR029014">
    <property type="entry name" value="NiFe-Hase_large"/>
</dbReference>
<dbReference type="NCBIfam" id="NF004739">
    <property type="entry name" value="PRK06075.1"/>
    <property type="match status" value="1"/>
</dbReference>
<dbReference type="NCBIfam" id="NF005649">
    <property type="entry name" value="PRK07415.1"/>
    <property type="match status" value="1"/>
</dbReference>
<dbReference type="PANTHER" id="PTHR11993:SF10">
    <property type="entry name" value="NADH DEHYDROGENASE [UBIQUINONE] IRON-SULFUR PROTEIN 2, MITOCHONDRIAL"/>
    <property type="match status" value="1"/>
</dbReference>
<dbReference type="PANTHER" id="PTHR11993">
    <property type="entry name" value="NADH-UBIQUINONE OXIDOREDUCTASE 49 KDA SUBUNIT"/>
    <property type="match status" value="1"/>
</dbReference>
<dbReference type="Pfam" id="PF00346">
    <property type="entry name" value="Complex1_49kDa"/>
    <property type="match status" value="1"/>
</dbReference>
<dbReference type="SUPFAM" id="SSF56762">
    <property type="entry name" value="HydB/Nqo4-like"/>
    <property type="match status" value="1"/>
</dbReference>
<dbReference type="PROSITE" id="PS00535">
    <property type="entry name" value="COMPLEX1_49K"/>
    <property type="match status" value="1"/>
</dbReference>
<proteinExistence type="inferred from homology"/>
<geneLocation type="chloroplast"/>
<name>NDHH_HELAN</name>
<sequence length="393" mass="45409">MTVPSTRKDLMIVNMGPHHPSMHGVLRLIVTLDGEDVIDCEPILGYLHRGMEKIAENRTIIQYLPYVTRWDYLATMFTEAITVNAPEQLGNIQVPKRASYIRVIMLELSRIASHLLWLGPFMADIGAQTPFFYIFRERELIYDLFEAATGMRMMHNFFRIGGVAADLPHGWIDKCLDFCDYFLTGIAEYQKLITRNPIFLERVEGVGIIGGEEAINWGLSGPMLRASGIEWDLRKVDHYECYDEFDWEVQWQKEGDSLARYLVRISEMTESIKIIQQALEGIPGGPYENLEIRRFDRVKDTVWNEFDYRFISKKPSPTFELSKQELYARVEAPKGELGIFLIGDKGVFPWRYKIRPPGFINLQILPQLVKRMKLADIMTILGSIDIIMGEVDR</sequence>
<organism>
    <name type="scientific">Helianthus annuus</name>
    <name type="common">Common sunflower</name>
    <dbReference type="NCBI Taxonomy" id="4232"/>
    <lineage>
        <taxon>Eukaryota</taxon>
        <taxon>Viridiplantae</taxon>
        <taxon>Streptophyta</taxon>
        <taxon>Embryophyta</taxon>
        <taxon>Tracheophyta</taxon>
        <taxon>Spermatophyta</taxon>
        <taxon>Magnoliopsida</taxon>
        <taxon>eudicotyledons</taxon>
        <taxon>Gunneridae</taxon>
        <taxon>Pentapetalae</taxon>
        <taxon>asterids</taxon>
        <taxon>campanulids</taxon>
        <taxon>Asterales</taxon>
        <taxon>Asteraceae</taxon>
        <taxon>Asteroideae</taxon>
        <taxon>Heliantheae alliance</taxon>
        <taxon>Heliantheae</taxon>
        <taxon>Helianthus</taxon>
    </lineage>
</organism>
<gene>
    <name evidence="1" type="primary">ndhH</name>
</gene>
<comment type="function">
    <text evidence="1">NDH shuttles electrons from NAD(P)H:plastoquinone, via FMN and iron-sulfur (Fe-S) centers, to quinones in the photosynthetic chain and possibly in a chloroplast respiratory chain. The immediate electron acceptor for the enzyme in this species is believed to be plastoquinone. Couples the redox reaction to proton translocation, and thus conserves the redox energy in a proton gradient.</text>
</comment>
<comment type="catalytic activity">
    <reaction evidence="1">
        <text>a plastoquinone + NADH + (n+1) H(+)(in) = a plastoquinol + NAD(+) + n H(+)(out)</text>
        <dbReference type="Rhea" id="RHEA:42608"/>
        <dbReference type="Rhea" id="RHEA-COMP:9561"/>
        <dbReference type="Rhea" id="RHEA-COMP:9562"/>
        <dbReference type="ChEBI" id="CHEBI:15378"/>
        <dbReference type="ChEBI" id="CHEBI:17757"/>
        <dbReference type="ChEBI" id="CHEBI:57540"/>
        <dbReference type="ChEBI" id="CHEBI:57945"/>
        <dbReference type="ChEBI" id="CHEBI:62192"/>
    </reaction>
</comment>
<comment type="catalytic activity">
    <reaction evidence="1">
        <text>a plastoquinone + NADPH + (n+1) H(+)(in) = a plastoquinol + NADP(+) + n H(+)(out)</text>
        <dbReference type="Rhea" id="RHEA:42612"/>
        <dbReference type="Rhea" id="RHEA-COMP:9561"/>
        <dbReference type="Rhea" id="RHEA-COMP:9562"/>
        <dbReference type="ChEBI" id="CHEBI:15378"/>
        <dbReference type="ChEBI" id="CHEBI:17757"/>
        <dbReference type="ChEBI" id="CHEBI:57783"/>
        <dbReference type="ChEBI" id="CHEBI:58349"/>
        <dbReference type="ChEBI" id="CHEBI:62192"/>
    </reaction>
</comment>
<comment type="subunit">
    <text evidence="1">NDH is composed of at least 16 different subunits, 5 of which are encoded in the nucleus.</text>
</comment>
<comment type="subcellular location">
    <subcellularLocation>
        <location evidence="1">Plastid</location>
        <location evidence="1">Chloroplast thylakoid membrane</location>
        <topology evidence="1">Peripheral membrane protein</topology>
        <orientation evidence="1">Stromal side</orientation>
    </subcellularLocation>
</comment>
<comment type="similarity">
    <text evidence="1">Belongs to the complex I 49 kDa subunit family.</text>
</comment>
<accession>Q1KXQ9</accession>
<protein>
    <recommendedName>
        <fullName evidence="1">NAD(P)H-quinone oxidoreductase subunit H, chloroplastic</fullName>
        <ecNumber evidence="1">7.1.1.-</ecNumber>
    </recommendedName>
    <alternativeName>
        <fullName>NAD(P)H dehydrogenase subunit H</fullName>
    </alternativeName>
    <alternativeName>
        <fullName evidence="1">NADH-plastoquinone oxidoreductase 49 kDa subunit</fullName>
    </alternativeName>
    <alternativeName>
        <fullName evidence="1">NADH-plastoquinone oxidoreductase subunit H</fullName>
    </alternativeName>
</protein>